<dbReference type="EC" id="7.1.2.2" evidence="1"/>
<dbReference type="EMBL" id="AB197035">
    <property type="protein sequence ID" value="BAE00186.1"/>
    <property type="molecule type" value="Genomic_DNA"/>
</dbReference>
<dbReference type="SMR" id="Q2WGJ0"/>
<dbReference type="GO" id="GO:0009535">
    <property type="term" value="C:chloroplast thylakoid membrane"/>
    <property type="evidence" value="ECO:0007669"/>
    <property type="project" value="UniProtKB-SubCell"/>
</dbReference>
<dbReference type="GO" id="GO:0045259">
    <property type="term" value="C:proton-transporting ATP synthase complex"/>
    <property type="evidence" value="ECO:0007669"/>
    <property type="project" value="UniProtKB-KW"/>
</dbReference>
<dbReference type="GO" id="GO:0043531">
    <property type="term" value="F:ADP binding"/>
    <property type="evidence" value="ECO:0007669"/>
    <property type="project" value="TreeGrafter"/>
</dbReference>
<dbReference type="GO" id="GO:0005524">
    <property type="term" value="F:ATP binding"/>
    <property type="evidence" value="ECO:0007669"/>
    <property type="project" value="UniProtKB-UniRule"/>
</dbReference>
<dbReference type="GO" id="GO:0046933">
    <property type="term" value="F:proton-transporting ATP synthase activity, rotational mechanism"/>
    <property type="evidence" value="ECO:0007669"/>
    <property type="project" value="UniProtKB-UniRule"/>
</dbReference>
<dbReference type="CDD" id="cd18113">
    <property type="entry name" value="ATP-synt_F1_alpha_C"/>
    <property type="match status" value="1"/>
</dbReference>
<dbReference type="CDD" id="cd18116">
    <property type="entry name" value="ATP-synt_F1_alpha_N"/>
    <property type="match status" value="1"/>
</dbReference>
<dbReference type="CDD" id="cd01132">
    <property type="entry name" value="F1-ATPase_alpha_CD"/>
    <property type="match status" value="1"/>
</dbReference>
<dbReference type="FunFam" id="3.40.50.300:FF:000002">
    <property type="entry name" value="ATP synthase subunit alpha"/>
    <property type="match status" value="1"/>
</dbReference>
<dbReference type="Gene3D" id="2.40.30.20">
    <property type="match status" value="1"/>
</dbReference>
<dbReference type="Gene3D" id="1.20.150.20">
    <property type="entry name" value="ATP synthase alpha/beta chain, C-terminal domain"/>
    <property type="match status" value="1"/>
</dbReference>
<dbReference type="Gene3D" id="3.40.50.300">
    <property type="entry name" value="P-loop containing nucleotide triphosphate hydrolases"/>
    <property type="match status" value="1"/>
</dbReference>
<dbReference type="HAMAP" id="MF_01346">
    <property type="entry name" value="ATP_synth_alpha_bact"/>
    <property type="match status" value="1"/>
</dbReference>
<dbReference type="InterPro" id="IPR023366">
    <property type="entry name" value="ATP_synth_asu-like_sf"/>
</dbReference>
<dbReference type="InterPro" id="IPR000793">
    <property type="entry name" value="ATP_synth_asu_C"/>
</dbReference>
<dbReference type="InterPro" id="IPR038376">
    <property type="entry name" value="ATP_synth_asu_C_sf"/>
</dbReference>
<dbReference type="InterPro" id="IPR033732">
    <property type="entry name" value="ATP_synth_F1_a_nt-bd_dom"/>
</dbReference>
<dbReference type="InterPro" id="IPR005294">
    <property type="entry name" value="ATP_synth_F1_asu"/>
</dbReference>
<dbReference type="InterPro" id="IPR004100">
    <property type="entry name" value="ATPase_F1/V1/A1_a/bsu_N"/>
</dbReference>
<dbReference type="InterPro" id="IPR036121">
    <property type="entry name" value="ATPase_F1/V1/A1_a/bsu_N_sf"/>
</dbReference>
<dbReference type="InterPro" id="IPR000194">
    <property type="entry name" value="ATPase_F1/V1/A1_a/bsu_nucl-bd"/>
</dbReference>
<dbReference type="InterPro" id="IPR027417">
    <property type="entry name" value="P-loop_NTPase"/>
</dbReference>
<dbReference type="NCBIfam" id="TIGR00962">
    <property type="entry name" value="atpA"/>
    <property type="match status" value="1"/>
</dbReference>
<dbReference type="PANTHER" id="PTHR48082">
    <property type="entry name" value="ATP SYNTHASE SUBUNIT ALPHA, MITOCHONDRIAL"/>
    <property type="match status" value="1"/>
</dbReference>
<dbReference type="PANTHER" id="PTHR48082:SF2">
    <property type="entry name" value="ATP SYNTHASE SUBUNIT ALPHA, MITOCHONDRIAL"/>
    <property type="match status" value="1"/>
</dbReference>
<dbReference type="Pfam" id="PF00006">
    <property type="entry name" value="ATP-synt_ab"/>
    <property type="match status" value="1"/>
</dbReference>
<dbReference type="Pfam" id="PF00306">
    <property type="entry name" value="ATP-synt_ab_C"/>
    <property type="match status" value="1"/>
</dbReference>
<dbReference type="Pfam" id="PF02874">
    <property type="entry name" value="ATP-synt_ab_N"/>
    <property type="match status" value="1"/>
</dbReference>
<dbReference type="SUPFAM" id="SSF47917">
    <property type="entry name" value="C-terminal domain of alpha and beta subunits of F1 ATP synthase"/>
    <property type="match status" value="1"/>
</dbReference>
<dbReference type="SUPFAM" id="SSF50615">
    <property type="entry name" value="N-terminal domain of alpha and beta subunits of F1 ATP synthase"/>
    <property type="match status" value="1"/>
</dbReference>
<dbReference type="SUPFAM" id="SSF52540">
    <property type="entry name" value="P-loop containing nucleoside triphosphate hydrolases"/>
    <property type="match status" value="1"/>
</dbReference>
<proteinExistence type="inferred from homology"/>
<organism>
    <name type="scientific">Selaginella uncinata</name>
    <name type="common">Blue spike-moss</name>
    <name type="synonym">Lycopodium uncinatum</name>
    <dbReference type="NCBI Taxonomy" id="307165"/>
    <lineage>
        <taxon>Eukaryota</taxon>
        <taxon>Viridiplantae</taxon>
        <taxon>Streptophyta</taxon>
        <taxon>Embryophyta</taxon>
        <taxon>Tracheophyta</taxon>
        <taxon>Lycopodiopsida</taxon>
        <taxon>Selaginellales</taxon>
        <taxon>Selaginellaceae</taxon>
        <taxon>Selaginella</taxon>
    </lineage>
</organism>
<comment type="function">
    <text evidence="1">Produces ATP from ADP in the presence of a proton gradient across the membrane. The alpha chain is a regulatory subunit.</text>
</comment>
<comment type="catalytic activity">
    <reaction evidence="1">
        <text>ATP + H2O + 4 H(+)(in) = ADP + phosphate + 5 H(+)(out)</text>
        <dbReference type="Rhea" id="RHEA:57720"/>
        <dbReference type="ChEBI" id="CHEBI:15377"/>
        <dbReference type="ChEBI" id="CHEBI:15378"/>
        <dbReference type="ChEBI" id="CHEBI:30616"/>
        <dbReference type="ChEBI" id="CHEBI:43474"/>
        <dbReference type="ChEBI" id="CHEBI:456216"/>
        <dbReference type="EC" id="7.1.2.2"/>
    </reaction>
</comment>
<comment type="subunit">
    <text evidence="1">F-type ATPases have 2 components, CF(1) - the catalytic core - and CF(0) - the membrane proton channel. CF(1) has five subunits: alpha(3), beta(3), gamma(1), delta(1), epsilon(1). CF(0) has four main subunits: a, b, b' and c.</text>
</comment>
<comment type="subcellular location">
    <subcellularLocation>
        <location evidence="1">Plastid</location>
        <location evidence="1">Chloroplast thylakoid membrane</location>
        <topology evidence="1">Peripheral membrane protein</topology>
    </subcellularLocation>
</comment>
<comment type="similarity">
    <text evidence="1">Belongs to the ATPase alpha/beta chains family.</text>
</comment>
<name>ATPA_SELUN</name>
<accession>Q2WGJ0</accession>
<protein>
    <recommendedName>
        <fullName evidence="1">ATP synthase subunit alpha, chloroplastic</fullName>
        <ecNumber evidence="1">7.1.2.2</ecNumber>
    </recommendedName>
    <alternativeName>
        <fullName evidence="1">ATP synthase F1 sector subunit alpha</fullName>
    </alternativeName>
    <alternativeName>
        <fullName evidence="1">F-ATPase subunit alpha</fullName>
    </alternativeName>
</protein>
<sequence length="507" mass="53516">MVNIRPDETSSIILGQTAQYDQEVGVFSTGTVLQVGDGIARIHGPDGVTAGELVESEDGTVGIALNSEPDNAGAVSMGDGSTIQEGSSVKATGKIAQIPVSDAYLGRVANAPAQPTDGKGRIAASEPRLTESPAPGIISRRSVYEPMQTGLIATDPMIPTGRGQRELIIGDRQTGKTAVAIDTTPNQRGQNVICVYVAIGQKASPAAQVVSTFEERGAMEYTVAVAETANPPATSQYLAPYTGAALAEYFMYRKRHTLIIYDDPSKQAQAYRQMSLLPRRPPGREAHPGDVPHLHPRPPERAAKLSSQPGEGSTTASPTVETQAGDVSAYIPTNVTSTTDGQIFLSADLSNAGVRPATNVGISASRVGPAAQIKATKQVAGKSKSELAQFAEPEASAQFASDPDKATRNQSARGQRSRELLKQSQPAPLPVEEQVATTHAGASGFSDVSEIGQVQGSPAQSREYLVTNKPEPAEIVRPTKTFTERAETILKEAIKEHTESFSLKKQI</sequence>
<evidence type="ECO:0000255" key="1">
    <source>
        <dbReference type="HAMAP-Rule" id="MF_01346"/>
    </source>
</evidence>
<evidence type="ECO:0000256" key="2">
    <source>
        <dbReference type="SAM" id="MobiDB-lite"/>
    </source>
</evidence>
<keyword id="KW-0066">ATP synthesis</keyword>
<keyword id="KW-0067">ATP-binding</keyword>
<keyword id="KW-0139">CF(1)</keyword>
<keyword id="KW-0150">Chloroplast</keyword>
<keyword id="KW-0375">Hydrogen ion transport</keyword>
<keyword id="KW-0406">Ion transport</keyword>
<keyword id="KW-0472">Membrane</keyword>
<keyword id="KW-0547">Nucleotide-binding</keyword>
<keyword id="KW-0934">Plastid</keyword>
<keyword id="KW-0793">Thylakoid</keyword>
<keyword id="KW-1278">Translocase</keyword>
<keyword id="KW-0813">Transport</keyword>
<geneLocation type="chloroplast"/>
<feature type="chain" id="PRO_0000238439" description="ATP synthase subunit alpha, chloroplastic">
    <location>
        <begin position="1"/>
        <end position="507"/>
    </location>
</feature>
<feature type="region of interest" description="Disordered" evidence="2">
    <location>
        <begin position="278"/>
        <end position="325"/>
    </location>
</feature>
<feature type="region of interest" description="Disordered" evidence="2">
    <location>
        <begin position="392"/>
        <end position="430"/>
    </location>
</feature>
<feature type="region of interest" description="Disordered" evidence="2">
    <location>
        <begin position="452"/>
        <end position="471"/>
    </location>
</feature>
<feature type="compositionally biased region" description="Basic and acidic residues" evidence="2">
    <location>
        <begin position="282"/>
        <end position="303"/>
    </location>
</feature>
<feature type="compositionally biased region" description="Polar residues" evidence="2">
    <location>
        <begin position="305"/>
        <end position="322"/>
    </location>
</feature>
<feature type="binding site" evidence="1">
    <location>
        <begin position="170"/>
        <end position="177"/>
    </location>
    <ligand>
        <name>ATP</name>
        <dbReference type="ChEBI" id="CHEBI:30616"/>
    </ligand>
</feature>
<feature type="site" description="Required for activity" evidence="1">
    <location>
        <position position="363"/>
    </location>
</feature>
<gene>
    <name evidence="1" type="primary">atpA</name>
</gene>
<reference key="1">
    <citation type="journal article" date="2007" name="J. Plant Res.">
        <title>The chloroplast genome from a lycophyte (microphyllophyte), Selaginella uncinata, has a unique inversion, transpositions and many gene losses.</title>
        <authorList>
            <person name="Tsuji S."/>
            <person name="Ueda K."/>
            <person name="Nishiyama T."/>
            <person name="Hasebe M."/>
            <person name="Yoshikawa S."/>
            <person name="Konagaya A."/>
            <person name="Nishiuchi T."/>
            <person name="Yamaguchi K."/>
        </authorList>
    </citation>
    <scope>NUCLEOTIDE SEQUENCE [LARGE SCALE GENOMIC DNA]</scope>
</reference>